<keyword id="KW-0414">Isoprene biosynthesis</keyword>
<keyword id="KW-0460">Magnesium</keyword>
<keyword id="KW-0479">Metal-binding</keyword>
<keyword id="KW-0784">Thiamine biosynthesis</keyword>
<keyword id="KW-0786">Thiamine pyrophosphate</keyword>
<keyword id="KW-0808">Transferase</keyword>
<sequence>MGLLETVKDPRDLAKLSGTELEQLAGEIREFLITNVAATGGHLGPNLGVVELTLAVHRNFDSPRDSIVFDTGHQSYVHKLLTGRQDFTTLRQQGGLSGYPDRAESEHDIVESSHASSSLSWADGISRARQLTGEGDRFVVAVVGDGALTGGMAWEAINNIAADKRRRVVIVVNDNGRSYAPTVGGFADYLASLRPTIDSLRTTPAYERMLDWWKKKLQDGGPAGQFTYKSLHAMKKGIKDWWAPQGMFEDLGMKYIGPVDGHNLQAMEHALNTAKAYGGPVIVHAMTEKGHGYAPALANEADQFHAVGIIDPETGEPTEMSGARSWTSVFAEEIADIADERSDIVGITGAMLIPVGLHKFAERHPERVIDVGIAEQHALTSAAGMAFGGLHPVVAVYATFLNRAFDQLLMDVALHKAGVTIVLDRAGVTGPDGPSHHGMWDMAMVQIVPGLHLAAPRDATRLREELREAVAINDAPTVVRFSKGSVGSEIEAIDRLHDGVDILARRPDGSTENDVLIVSVGAMSELALDVATRLGAQGISSTVVDPRWVLPVRKSIIALAARHRLVICIEDGVRAGGVGSRIRQEMRAAGVDTALNEVGLPVEFLVHGSRSQVLERVGLTAQKITHDVVAQVLGTKVPFARPLPGQEHPTTGSLPTL</sequence>
<accession>A1R5N7</accession>
<gene>
    <name evidence="1" type="primary">dxs</name>
    <name type="ordered locus">AAur_1790</name>
</gene>
<organism>
    <name type="scientific">Paenarthrobacter aurescens (strain TC1)</name>
    <dbReference type="NCBI Taxonomy" id="290340"/>
    <lineage>
        <taxon>Bacteria</taxon>
        <taxon>Bacillati</taxon>
        <taxon>Actinomycetota</taxon>
        <taxon>Actinomycetes</taxon>
        <taxon>Micrococcales</taxon>
        <taxon>Micrococcaceae</taxon>
        <taxon>Paenarthrobacter</taxon>
    </lineage>
</organism>
<proteinExistence type="inferred from homology"/>
<feature type="chain" id="PRO_1000019005" description="1-deoxy-D-xylulose-5-phosphate synthase">
    <location>
        <begin position="1"/>
        <end position="657"/>
    </location>
</feature>
<feature type="binding site" evidence="1">
    <location>
        <position position="73"/>
    </location>
    <ligand>
        <name>thiamine diphosphate</name>
        <dbReference type="ChEBI" id="CHEBI:58937"/>
    </ligand>
</feature>
<feature type="binding site" evidence="1">
    <location>
        <begin position="113"/>
        <end position="115"/>
    </location>
    <ligand>
        <name>thiamine diphosphate</name>
        <dbReference type="ChEBI" id="CHEBI:58937"/>
    </ligand>
</feature>
<feature type="binding site" evidence="1">
    <location>
        <position position="145"/>
    </location>
    <ligand>
        <name>Mg(2+)</name>
        <dbReference type="ChEBI" id="CHEBI:18420"/>
    </ligand>
</feature>
<feature type="binding site" evidence="1">
    <location>
        <begin position="146"/>
        <end position="147"/>
    </location>
    <ligand>
        <name>thiamine diphosphate</name>
        <dbReference type="ChEBI" id="CHEBI:58937"/>
    </ligand>
</feature>
<feature type="binding site" evidence="1">
    <location>
        <position position="175"/>
    </location>
    <ligand>
        <name>Mg(2+)</name>
        <dbReference type="ChEBI" id="CHEBI:18420"/>
    </ligand>
</feature>
<feature type="binding site" evidence="1">
    <location>
        <position position="175"/>
    </location>
    <ligand>
        <name>thiamine diphosphate</name>
        <dbReference type="ChEBI" id="CHEBI:58937"/>
    </ligand>
</feature>
<feature type="binding site" evidence="1">
    <location>
        <position position="293"/>
    </location>
    <ligand>
        <name>thiamine diphosphate</name>
        <dbReference type="ChEBI" id="CHEBI:58937"/>
    </ligand>
</feature>
<feature type="binding site" evidence="1">
    <location>
        <position position="375"/>
    </location>
    <ligand>
        <name>thiamine diphosphate</name>
        <dbReference type="ChEBI" id="CHEBI:58937"/>
    </ligand>
</feature>
<evidence type="ECO:0000255" key="1">
    <source>
        <dbReference type="HAMAP-Rule" id="MF_00315"/>
    </source>
</evidence>
<comment type="function">
    <text evidence="1">Catalyzes the acyloin condensation reaction between C atoms 2 and 3 of pyruvate and glyceraldehyde 3-phosphate to yield 1-deoxy-D-xylulose-5-phosphate (DXP).</text>
</comment>
<comment type="catalytic activity">
    <reaction evidence="1">
        <text>D-glyceraldehyde 3-phosphate + pyruvate + H(+) = 1-deoxy-D-xylulose 5-phosphate + CO2</text>
        <dbReference type="Rhea" id="RHEA:12605"/>
        <dbReference type="ChEBI" id="CHEBI:15361"/>
        <dbReference type="ChEBI" id="CHEBI:15378"/>
        <dbReference type="ChEBI" id="CHEBI:16526"/>
        <dbReference type="ChEBI" id="CHEBI:57792"/>
        <dbReference type="ChEBI" id="CHEBI:59776"/>
        <dbReference type="EC" id="2.2.1.7"/>
    </reaction>
</comment>
<comment type="cofactor">
    <cofactor evidence="1">
        <name>Mg(2+)</name>
        <dbReference type="ChEBI" id="CHEBI:18420"/>
    </cofactor>
    <text evidence="1">Binds 1 Mg(2+) ion per subunit.</text>
</comment>
<comment type="cofactor">
    <cofactor evidence="1">
        <name>thiamine diphosphate</name>
        <dbReference type="ChEBI" id="CHEBI:58937"/>
    </cofactor>
    <text evidence="1">Binds 1 thiamine pyrophosphate per subunit.</text>
</comment>
<comment type="pathway">
    <text evidence="1">Metabolic intermediate biosynthesis; 1-deoxy-D-xylulose 5-phosphate biosynthesis; 1-deoxy-D-xylulose 5-phosphate from D-glyceraldehyde 3-phosphate and pyruvate: step 1/1.</text>
</comment>
<comment type="subunit">
    <text evidence="1">Homodimer.</text>
</comment>
<comment type="similarity">
    <text evidence="1">Belongs to the transketolase family. DXPS subfamily.</text>
</comment>
<reference key="1">
    <citation type="journal article" date="2006" name="PLoS Genet.">
        <title>Secrets of soil survival revealed by the genome sequence of Arthrobacter aurescens TC1.</title>
        <authorList>
            <person name="Mongodin E.F."/>
            <person name="Shapir N."/>
            <person name="Daugherty S.C."/>
            <person name="DeBoy R.T."/>
            <person name="Emerson J.B."/>
            <person name="Shvartzbeyn A."/>
            <person name="Radune D."/>
            <person name="Vamathevan J."/>
            <person name="Riggs F."/>
            <person name="Grinberg V."/>
            <person name="Khouri H.M."/>
            <person name="Wackett L.P."/>
            <person name="Nelson K.E."/>
            <person name="Sadowsky M.J."/>
        </authorList>
    </citation>
    <scope>NUCLEOTIDE SEQUENCE [LARGE SCALE GENOMIC DNA]</scope>
    <source>
        <strain>TC1</strain>
    </source>
</reference>
<protein>
    <recommendedName>
        <fullName evidence="1">1-deoxy-D-xylulose-5-phosphate synthase</fullName>
        <ecNumber evidence="1">2.2.1.7</ecNumber>
    </recommendedName>
    <alternativeName>
        <fullName evidence="1">1-deoxyxylulose-5-phosphate synthase</fullName>
        <shortName evidence="1">DXP synthase</shortName>
        <shortName evidence="1">DXPS</shortName>
    </alternativeName>
</protein>
<dbReference type="EC" id="2.2.1.7" evidence="1"/>
<dbReference type="EMBL" id="CP000474">
    <property type="protein sequence ID" value="ABM09947.1"/>
    <property type="molecule type" value="Genomic_DNA"/>
</dbReference>
<dbReference type="RefSeq" id="WP_011774493.1">
    <property type="nucleotide sequence ID" value="NC_008711.1"/>
</dbReference>
<dbReference type="SMR" id="A1R5N7"/>
<dbReference type="STRING" id="290340.AAur_1790"/>
<dbReference type="KEGG" id="aau:AAur_1790"/>
<dbReference type="eggNOG" id="COG1154">
    <property type="taxonomic scope" value="Bacteria"/>
</dbReference>
<dbReference type="HOGENOM" id="CLU_009227_1_4_11"/>
<dbReference type="OrthoDB" id="9803371at2"/>
<dbReference type="UniPathway" id="UPA00064">
    <property type="reaction ID" value="UER00091"/>
</dbReference>
<dbReference type="Proteomes" id="UP000000637">
    <property type="component" value="Chromosome"/>
</dbReference>
<dbReference type="GO" id="GO:0005829">
    <property type="term" value="C:cytosol"/>
    <property type="evidence" value="ECO:0007669"/>
    <property type="project" value="TreeGrafter"/>
</dbReference>
<dbReference type="GO" id="GO:0008661">
    <property type="term" value="F:1-deoxy-D-xylulose-5-phosphate synthase activity"/>
    <property type="evidence" value="ECO:0007669"/>
    <property type="project" value="UniProtKB-UniRule"/>
</dbReference>
<dbReference type="GO" id="GO:0000287">
    <property type="term" value="F:magnesium ion binding"/>
    <property type="evidence" value="ECO:0007669"/>
    <property type="project" value="UniProtKB-UniRule"/>
</dbReference>
<dbReference type="GO" id="GO:0030976">
    <property type="term" value="F:thiamine pyrophosphate binding"/>
    <property type="evidence" value="ECO:0007669"/>
    <property type="project" value="UniProtKB-UniRule"/>
</dbReference>
<dbReference type="GO" id="GO:0052865">
    <property type="term" value="P:1-deoxy-D-xylulose 5-phosphate biosynthetic process"/>
    <property type="evidence" value="ECO:0007669"/>
    <property type="project" value="UniProtKB-UniPathway"/>
</dbReference>
<dbReference type="GO" id="GO:0019288">
    <property type="term" value="P:isopentenyl diphosphate biosynthetic process, methylerythritol 4-phosphate pathway"/>
    <property type="evidence" value="ECO:0007669"/>
    <property type="project" value="TreeGrafter"/>
</dbReference>
<dbReference type="GO" id="GO:0016114">
    <property type="term" value="P:terpenoid biosynthetic process"/>
    <property type="evidence" value="ECO:0007669"/>
    <property type="project" value="UniProtKB-UniRule"/>
</dbReference>
<dbReference type="GO" id="GO:0009228">
    <property type="term" value="P:thiamine biosynthetic process"/>
    <property type="evidence" value="ECO:0007669"/>
    <property type="project" value="UniProtKB-UniRule"/>
</dbReference>
<dbReference type="CDD" id="cd02007">
    <property type="entry name" value="TPP_DXS"/>
    <property type="match status" value="1"/>
</dbReference>
<dbReference type="CDD" id="cd07033">
    <property type="entry name" value="TPP_PYR_DXS_TK_like"/>
    <property type="match status" value="1"/>
</dbReference>
<dbReference type="FunFam" id="3.40.50.970:FF:000005">
    <property type="entry name" value="1-deoxy-D-xylulose-5-phosphate synthase"/>
    <property type="match status" value="1"/>
</dbReference>
<dbReference type="Gene3D" id="3.40.50.920">
    <property type="match status" value="1"/>
</dbReference>
<dbReference type="Gene3D" id="3.40.50.970">
    <property type="match status" value="2"/>
</dbReference>
<dbReference type="HAMAP" id="MF_00315">
    <property type="entry name" value="DXP_synth"/>
    <property type="match status" value="1"/>
</dbReference>
<dbReference type="InterPro" id="IPR005477">
    <property type="entry name" value="Dxylulose-5-P_synthase"/>
</dbReference>
<dbReference type="InterPro" id="IPR029061">
    <property type="entry name" value="THDP-binding"/>
</dbReference>
<dbReference type="InterPro" id="IPR009014">
    <property type="entry name" value="Transketo_C/PFOR_II"/>
</dbReference>
<dbReference type="InterPro" id="IPR005475">
    <property type="entry name" value="Transketolase-like_Pyr-bd"/>
</dbReference>
<dbReference type="InterPro" id="IPR020826">
    <property type="entry name" value="Transketolase_BS"/>
</dbReference>
<dbReference type="InterPro" id="IPR033248">
    <property type="entry name" value="Transketolase_C"/>
</dbReference>
<dbReference type="InterPro" id="IPR049557">
    <property type="entry name" value="Transketolase_CS"/>
</dbReference>
<dbReference type="NCBIfam" id="TIGR00204">
    <property type="entry name" value="dxs"/>
    <property type="match status" value="1"/>
</dbReference>
<dbReference type="NCBIfam" id="NF003933">
    <property type="entry name" value="PRK05444.2-2"/>
    <property type="match status" value="1"/>
</dbReference>
<dbReference type="PANTHER" id="PTHR43322">
    <property type="entry name" value="1-D-DEOXYXYLULOSE 5-PHOSPHATE SYNTHASE-RELATED"/>
    <property type="match status" value="1"/>
</dbReference>
<dbReference type="PANTHER" id="PTHR43322:SF5">
    <property type="entry name" value="1-DEOXY-D-XYLULOSE-5-PHOSPHATE SYNTHASE, CHLOROPLASTIC"/>
    <property type="match status" value="1"/>
</dbReference>
<dbReference type="Pfam" id="PF13292">
    <property type="entry name" value="DXP_synthase_N"/>
    <property type="match status" value="1"/>
</dbReference>
<dbReference type="Pfam" id="PF02779">
    <property type="entry name" value="Transket_pyr"/>
    <property type="match status" value="1"/>
</dbReference>
<dbReference type="Pfam" id="PF02780">
    <property type="entry name" value="Transketolase_C"/>
    <property type="match status" value="1"/>
</dbReference>
<dbReference type="SMART" id="SM00861">
    <property type="entry name" value="Transket_pyr"/>
    <property type="match status" value="1"/>
</dbReference>
<dbReference type="SUPFAM" id="SSF52518">
    <property type="entry name" value="Thiamin diphosphate-binding fold (THDP-binding)"/>
    <property type="match status" value="2"/>
</dbReference>
<dbReference type="SUPFAM" id="SSF52922">
    <property type="entry name" value="TK C-terminal domain-like"/>
    <property type="match status" value="1"/>
</dbReference>
<dbReference type="PROSITE" id="PS00801">
    <property type="entry name" value="TRANSKETOLASE_1"/>
    <property type="match status" value="1"/>
</dbReference>
<dbReference type="PROSITE" id="PS00802">
    <property type="entry name" value="TRANSKETOLASE_2"/>
    <property type="match status" value="1"/>
</dbReference>
<name>DXS_PAEAT</name>